<dbReference type="EMBL" id="BC111292">
    <property type="protein sequence ID" value="AAI11293.1"/>
    <property type="molecule type" value="mRNA"/>
</dbReference>
<dbReference type="RefSeq" id="NP_001033237.1">
    <property type="nucleotide sequence ID" value="NM_001038148.1"/>
</dbReference>
<dbReference type="SMR" id="Q2T9S3"/>
<dbReference type="FunCoup" id="Q2T9S3">
    <property type="interactions" value="4121"/>
</dbReference>
<dbReference type="STRING" id="9913.ENSBTAP00000011619"/>
<dbReference type="PaxDb" id="9913-ENSBTAP00000011619"/>
<dbReference type="GeneID" id="529410"/>
<dbReference type="KEGG" id="bta:529410"/>
<dbReference type="CTD" id="10621"/>
<dbReference type="eggNOG" id="KOG3233">
    <property type="taxonomic scope" value="Eukaryota"/>
</dbReference>
<dbReference type="InParanoid" id="Q2T9S3"/>
<dbReference type="OrthoDB" id="613763at2759"/>
<dbReference type="Proteomes" id="UP000009136">
    <property type="component" value="Unplaced"/>
</dbReference>
<dbReference type="GO" id="GO:0005666">
    <property type="term" value="C:RNA polymerase III complex"/>
    <property type="evidence" value="ECO:0000318"/>
    <property type="project" value="GO_Central"/>
</dbReference>
<dbReference type="GO" id="GO:0003690">
    <property type="term" value="F:double-stranded DNA binding"/>
    <property type="evidence" value="ECO:0000250"/>
    <property type="project" value="UniProtKB"/>
</dbReference>
<dbReference type="GO" id="GO:0051536">
    <property type="term" value="F:iron-sulfur cluster binding"/>
    <property type="evidence" value="ECO:0007669"/>
    <property type="project" value="UniProtKB-KW"/>
</dbReference>
<dbReference type="GO" id="GO:0046872">
    <property type="term" value="F:metal ion binding"/>
    <property type="evidence" value="ECO:0007669"/>
    <property type="project" value="UniProtKB-KW"/>
</dbReference>
<dbReference type="GO" id="GO:0051607">
    <property type="term" value="P:defense response to virus"/>
    <property type="evidence" value="ECO:0007669"/>
    <property type="project" value="UniProtKB-KW"/>
</dbReference>
<dbReference type="GO" id="GO:0045087">
    <property type="term" value="P:innate immune response"/>
    <property type="evidence" value="ECO:0007669"/>
    <property type="project" value="UniProtKB-KW"/>
</dbReference>
<dbReference type="GO" id="GO:0045089">
    <property type="term" value="P:positive regulation of innate immune response"/>
    <property type="evidence" value="ECO:0000250"/>
    <property type="project" value="UniProtKB"/>
</dbReference>
<dbReference type="GO" id="GO:0032728">
    <property type="term" value="P:positive regulation of interferon-beta production"/>
    <property type="evidence" value="ECO:0000250"/>
    <property type="project" value="UniProtKB"/>
</dbReference>
<dbReference type="GO" id="GO:0006383">
    <property type="term" value="P:transcription by RNA polymerase III"/>
    <property type="evidence" value="ECO:0007669"/>
    <property type="project" value="InterPro"/>
</dbReference>
<dbReference type="FunFam" id="1.10.10.10:FF:000116">
    <property type="entry name" value="DNA-directed RNA polymerase III subunit RPC6"/>
    <property type="match status" value="1"/>
</dbReference>
<dbReference type="FunFam" id="1.10.10.10:FF:000237">
    <property type="entry name" value="DNA-directed RNA polymerase III subunit RPC6"/>
    <property type="match status" value="1"/>
</dbReference>
<dbReference type="Gene3D" id="1.10.10.10">
    <property type="entry name" value="Winged helix-like DNA-binding domain superfamily/Winged helix DNA-binding domain"/>
    <property type="match status" value="2"/>
</dbReference>
<dbReference type="InterPro" id="IPR007832">
    <property type="entry name" value="RNA_pol_Rpc34"/>
</dbReference>
<dbReference type="InterPro" id="IPR016049">
    <property type="entry name" value="RNA_pol_Rpc34-like"/>
</dbReference>
<dbReference type="InterPro" id="IPR036388">
    <property type="entry name" value="WH-like_DNA-bd_sf"/>
</dbReference>
<dbReference type="InterPro" id="IPR036390">
    <property type="entry name" value="WH_DNA-bd_sf"/>
</dbReference>
<dbReference type="PANTHER" id="PTHR12780">
    <property type="entry name" value="RNA POLYMERASE III DNA DIRECTED , 39KD SUBUNIT-RELATED"/>
    <property type="match status" value="1"/>
</dbReference>
<dbReference type="Pfam" id="PF05158">
    <property type="entry name" value="RNA_pol_Rpc34"/>
    <property type="match status" value="1"/>
</dbReference>
<dbReference type="PIRSF" id="PIRSF028763">
    <property type="entry name" value="RNA_pol_Rpc34"/>
    <property type="match status" value="1"/>
</dbReference>
<dbReference type="SUPFAM" id="SSF46785">
    <property type="entry name" value="Winged helix' DNA-binding domain"/>
    <property type="match status" value="2"/>
</dbReference>
<evidence type="ECO:0000250" key="1">
    <source>
        <dbReference type="UniProtKB" id="Q9H1D9"/>
    </source>
</evidence>
<evidence type="ECO:0000305" key="2"/>
<gene>
    <name type="primary">POLR3F</name>
</gene>
<keyword id="KW-0007">Acetylation</keyword>
<keyword id="KW-0051">Antiviral defense</keyword>
<keyword id="KW-0240">DNA-directed RNA polymerase</keyword>
<keyword id="KW-0391">Immunity</keyword>
<keyword id="KW-0399">Innate immunity</keyword>
<keyword id="KW-0408">Iron</keyword>
<keyword id="KW-0411">Iron-sulfur</keyword>
<keyword id="KW-1017">Isopeptide bond</keyword>
<keyword id="KW-0479">Metal-binding</keyword>
<keyword id="KW-0539">Nucleus</keyword>
<keyword id="KW-1185">Reference proteome</keyword>
<keyword id="KW-0804">Transcription</keyword>
<keyword id="KW-0832">Ubl conjugation</keyword>
<proteinExistence type="evidence at transcript level"/>
<name>RPC6_BOVIN</name>
<protein>
    <recommendedName>
        <fullName>DNA-directed RNA polymerase III subunit RPC6</fullName>
        <shortName>RNA polymerase III subunit C6</shortName>
    </recommendedName>
    <alternativeName>
        <fullName>DNA-directed RNA polymerase III subunit F</fullName>
    </alternativeName>
</protein>
<accession>Q2T9S3</accession>
<comment type="function">
    <text evidence="1">DNA-dependent RNA polymerase catalyzes the transcription of DNA into RNA using the four ribonucleoside triphosphates as substrates (By similarity). Specific peripheric component of RNA polymerase III (Pol III) which synthesizes small non-coding RNAs including 5S rRNA, snRNAs, tRNAs and miRNAs from at least 500 distinct genomic loci. Part of POLR3C/RPC3-POLR3F/RPC6-POLR3G/RPC7 heterotrimer that coordinates the dynamics of Pol III stalk and clamp modules during the transition from apo to elongation state (By similarity). Pol III plays a key role in sensing and limiting infection by intracellular bacteria and DNA viruses, including varicella zoster virus. Acts as a nuclear and cytosolic DNA sensor detecting AT-rich DNA, involved in innate immune response. Can sense non-self dsDNA that serves as template for transcription into dsRNA. The non-self RNA polymerase III transcripts, such as Epstein-Barr virus-encoded RNAs (EBERs) induce type I interferon and NF-kappa-B through the RIG-I pathway. Preferentially binds double-stranded DNA (dsDNA) (By similarity).</text>
</comment>
<comment type="subunit">
    <text evidence="1">Component of the RNA polymerase III complex consisting of 17 subunits: a ten-subunit horseshoe-shaped catalytic core composed of POLR3A/RPC1, POLR3B/RPC2, POLR1C/RPAC1, POLR1D/RPAC2, POLR3K/RPC10, POLR2E/RPABC1, POLR2F/RPABC2, POLR2H/RPABC3, POLR2K/RPABC4 and POLR2L/RPABC5; a mobile stalk composed of two subunits POLR3H/RPC8 and CRCP/RPC9, protruding from the core and functioning primarily in transcription initiation; and additional subunits homologous to general transcription factors of the RNA polymerase II machinery, POLR3C/RPC3-POLR3F/RPC6-POLR3G/RPC7 heterotrimer required for transcription initiation and POLR3D/RPC4-POLR3E/RPC5 heterodimer involved in both transcription initiation and termination (By similarity). Directly interacts with POLR3C (By similarity). Interacts with TBP and TFIIIB90 and GTF3C4 (By similarity). Interacts with MAF1. As part of the RNA polymerase III complex, interacts with PKP2 (By similarity).</text>
</comment>
<comment type="subcellular location">
    <subcellularLocation>
        <location evidence="1">Nucleus</location>
    </subcellularLocation>
</comment>
<comment type="domain">
    <text evidence="1">The [4FE-4S] cluster-binding domain adopts a globular structure that serves as an interaction hub that connects the POLR3C/RPC3-POLR3F/RPC6-POLR3G/RPC7 heterotrimer to the Pol III core.</text>
</comment>
<comment type="similarity">
    <text evidence="2">Belongs to the eukaryotic RPC34/RPC39 RNA polymerase subunit family.</text>
</comment>
<sequence length="316" mass="35684">MAEVKVKVQPPDADPVEIENRIIELCHQFPHGITDQVIQNEMPHIEAQQRAVAINRLLSMGQLDLLRSNTGLLYRIKDSQNAGKMKGSDNQEKLVYQIIEDAGNKGIWSRDIRYKSNLPLTEINKILKNLESKKLIKAVKSVAASKKKVYMLYNLQPDRSVTGGAWYSDQDFESEFVEVLNQQCFKFLQNKAETARESKQNPMIQRNSSFASSHEVWKYICELGISKVELSMEDIETILNTLIYDGKVEMTIIAAKEGTVGSVDGHMKLYRAVSPIIPPTGLVRAPCGLCPVFDDCHEGGEISPSNCIYMTEWLEF</sequence>
<feature type="initiator methionine" description="Removed" evidence="1">
    <location>
        <position position="1"/>
    </location>
</feature>
<feature type="chain" id="PRO_0000246167" description="DNA-directed RNA polymerase III subunit RPC6">
    <location>
        <begin position="2"/>
        <end position="316"/>
    </location>
</feature>
<feature type="binding site" evidence="1">
    <location>
        <position position="287"/>
    </location>
    <ligand>
        <name>[4Fe-4S] cluster</name>
        <dbReference type="ChEBI" id="CHEBI:49883"/>
    </ligand>
</feature>
<feature type="binding site" evidence="1">
    <location>
        <position position="290"/>
    </location>
    <ligand>
        <name>[4Fe-4S] cluster</name>
        <dbReference type="ChEBI" id="CHEBI:49883"/>
    </ligand>
</feature>
<feature type="binding site" evidence="1">
    <location>
        <position position="296"/>
    </location>
    <ligand>
        <name>[4Fe-4S] cluster</name>
        <dbReference type="ChEBI" id="CHEBI:49883"/>
    </ligand>
</feature>
<feature type="binding site" evidence="1">
    <location>
        <position position="307"/>
    </location>
    <ligand>
        <name>[4Fe-4S] cluster</name>
        <dbReference type="ChEBI" id="CHEBI:49883"/>
    </ligand>
</feature>
<feature type="modified residue" description="N-acetylalanine" evidence="1">
    <location>
        <position position="2"/>
    </location>
</feature>
<feature type="cross-link" description="Glycyl lysine isopeptide (Lys-Gly) (interchain with G-Cter in SUMO2)" evidence="1">
    <location>
        <position position="5"/>
    </location>
</feature>
<feature type="cross-link" description="Glycyl lysine isopeptide (Lys-Gly) (interchain with G-Cter in SUMO2)" evidence="1">
    <location>
        <position position="7"/>
    </location>
</feature>
<reference key="1">
    <citation type="submission" date="2005-12" db="EMBL/GenBank/DDBJ databases">
        <authorList>
            <consortium name="NIH - Mammalian Gene Collection (MGC) project"/>
        </authorList>
    </citation>
    <scope>NUCLEOTIDE SEQUENCE [LARGE SCALE MRNA]</scope>
    <source>
        <strain>Crossbred X Angus</strain>
        <tissue>Liver</tissue>
    </source>
</reference>
<organism>
    <name type="scientific">Bos taurus</name>
    <name type="common">Bovine</name>
    <dbReference type="NCBI Taxonomy" id="9913"/>
    <lineage>
        <taxon>Eukaryota</taxon>
        <taxon>Metazoa</taxon>
        <taxon>Chordata</taxon>
        <taxon>Craniata</taxon>
        <taxon>Vertebrata</taxon>
        <taxon>Euteleostomi</taxon>
        <taxon>Mammalia</taxon>
        <taxon>Eutheria</taxon>
        <taxon>Laurasiatheria</taxon>
        <taxon>Artiodactyla</taxon>
        <taxon>Ruminantia</taxon>
        <taxon>Pecora</taxon>
        <taxon>Bovidae</taxon>
        <taxon>Bovinae</taxon>
        <taxon>Bos</taxon>
    </lineage>
</organism>